<reference key="1">
    <citation type="journal article" date="2002" name="Dev. Genes Evol.">
        <title>Yan regulates Lozenge during Drosophila eye development.</title>
        <authorList>
            <person name="Behan K.J."/>
            <person name="Nichols C.D."/>
            <person name="Cheung T.L."/>
            <person name="Farlow A."/>
            <person name="Hogan B.M."/>
            <person name="Batterham P."/>
            <person name="Pollock J.A."/>
        </authorList>
    </citation>
    <scope>NUCLEOTIDE SEQUENCE [GENOMIC DNA]</scope>
</reference>
<reference key="2">
    <citation type="journal article" date="2000" name="Science">
        <title>The genome sequence of Drosophila melanogaster.</title>
        <authorList>
            <person name="Adams M.D."/>
            <person name="Celniker S.E."/>
            <person name="Holt R.A."/>
            <person name="Evans C.A."/>
            <person name="Gocayne J.D."/>
            <person name="Amanatides P.G."/>
            <person name="Scherer S.E."/>
            <person name="Li P.W."/>
            <person name="Hoskins R.A."/>
            <person name="Galle R.F."/>
            <person name="George R.A."/>
            <person name="Lewis S.E."/>
            <person name="Richards S."/>
            <person name="Ashburner M."/>
            <person name="Henderson S.N."/>
            <person name="Sutton G.G."/>
            <person name="Wortman J.R."/>
            <person name="Yandell M.D."/>
            <person name="Zhang Q."/>
            <person name="Chen L.X."/>
            <person name="Brandon R.C."/>
            <person name="Rogers Y.-H.C."/>
            <person name="Blazej R.G."/>
            <person name="Champe M."/>
            <person name="Pfeiffer B.D."/>
            <person name="Wan K.H."/>
            <person name="Doyle C."/>
            <person name="Baxter E.G."/>
            <person name="Helt G."/>
            <person name="Nelson C.R."/>
            <person name="Miklos G.L.G."/>
            <person name="Abril J.F."/>
            <person name="Agbayani A."/>
            <person name="An H.-J."/>
            <person name="Andrews-Pfannkoch C."/>
            <person name="Baldwin D."/>
            <person name="Ballew R.M."/>
            <person name="Basu A."/>
            <person name="Baxendale J."/>
            <person name="Bayraktaroglu L."/>
            <person name="Beasley E.M."/>
            <person name="Beeson K.Y."/>
            <person name="Benos P.V."/>
            <person name="Berman B.P."/>
            <person name="Bhandari D."/>
            <person name="Bolshakov S."/>
            <person name="Borkova D."/>
            <person name="Botchan M.R."/>
            <person name="Bouck J."/>
            <person name="Brokstein P."/>
            <person name="Brottier P."/>
            <person name="Burtis K.C."/>
            <person name="Busam D.A."/>
            <person name="Butler H."/>
            <person name="Cadieu E."/>
            <person name="Center A."/>
            <person name="Chandra I."/>
            <person name="Cherry J.M."/>
            <person name="Cawley S."/>
            <person name="Dahlke C."/>
            <person name="Davenport L.B."/>
            <person name="Davies P."/>
            <person name="de Pablos B."/>
            <person name="Delcher A."/>
            <person name="Deng Z."/>
            <person name="Mays A.D."/>
            <person name="Dew I."/>
            <person name="Dietz S.M."/>
            <person name="Dodson K."/>
            <person name="Doup L.E."/>
            <person name="Downes M."/>
            <person name="Dugan-Rocha S."/>
            <person name="Dunkov B.C."/>
            <person name="Dunn P."/>
            <person name="Durbin K.J."/>
            <person name="Evangelista C.C."/>
            <person name="Ferraz C."/>
            <person name="Ferriera S."/>
            <person name="Fleischmann W."/>
            <person name="Fosler C."/>
            <person name="Gabrielian A.E."/>
            <person name="Garg N.S."/>
            <person name="Gelbart W.M."/>
            <person name="Glasser K."/>
            <person name="Glodek A."/>
            <person name="Gong F."/>
            <person name="Gorrell J.H."/>
            <person name="Gu Z."/>
            <person name="Guan P."/>
            <person name="Harris M."/>
            <person name="Harris N.L."/>
            <person name="Harvey D.A."/>
            <person name="Heiman T.J."/>
            <person name="Hernandez J.R."/>
            <person name="Houck J."/>
            <person name="Hostin D."/>
            <person name="Houston K.A."/>
            <person name="Howland T.J."/>
            <person name="Wei M.-H."/>
            <person name="Ibegwam C."/>
            <person name="Jalali M."/>
            <person name="Kalush F."/>
            <person name="Karpen G.H."/>
            <person name="Ke Z."/>
            <person name="Kennison J.A."/>
            <person name="Ketchum K.A."/>
            <person name="Kimmel B.E."/>
            <person name="Kodira C.D."/>
            <person name="Kraft C.L."/>
            <person name="Kravitz S."/>
            <person name="Kulp D."/>
            <person name="Lai Z."/>
            <person name="Lasko P."/>
            <person name="Lei Y."/>
            <person name="Levitsky A.A."/>
            <person name="Li J.H."/>
            <person name="Li Z."/>
            <person name="Liang Y."/>
            <person name="Lin X."/>
            <person name="Liu X."/>
            <person name="Mattei B."/>
            <person name="McIntosh T.C."/>
            <person name="McLeod M.P."/>
            <person name="McPherson D."/>
            <person name="Merkulov G."/>
            <person name="Milshina N.V."/>
            <person name="Mobarry C."/>
            <person name="Morris J."/>
            <person name="Moshrefi A."/>
            <person name="Mount S.M."/>
            <person name="Moy M."/>
            <person name="Murphy B."/>
            <person name="Murphy L."/>
            <person name="Muzny D.M."/>
            <person name="Nelson D.L."/>
            <person name="Nelson D.R."/>
            <person name="Nelson K.A."/>
            <person name="Nixon K."/>
            <person name="Nusskern D.R."/>
            <person name="Pacleb J.M."/>
            <person name="Palazzolo M."/>
            <person name="Pittman G.S."/>
            <person name="Pan S."/>
            <person name="Pollard J."/>
            <person name="Puri V."/>
            <person name="Reese M.G."/>
            <person name="Reinert K."/>
            <person name="Remington K."/>
            <person name="Saunders R.D.C."/>
            <person name="Scheeler F."/>
            <person name="Shen H."/>
            <person name="Shue B.C."/>
            <person name="Siden-Kiamos I."/>
            <person name="Simpson M."/>
            <person name="Skupski M.P."/>
            <person name="Smith T.J."/>
            <person name="Spier E."/>
            <person name="Spradling A.C."/>
            <person name="Stapleton M."/>
            <person name="Strong R."/>
            <person name="Sun E."/>
            <person name="Svirskas R."/>
            <person name="Tector C."/>
            <person name="Turner R."/>
            <person name="Venter E."/>
            <person name="Wang A.H."/>
            <person name="Wang X."/>
            <person name="Wang Z.-Y."/>
            <person name="Wassarman D.A."/>
            <person name="Weinstock G.M."/>
            <person name="Weissenbach J."/>
            <person name="Williams S.M."/>
            <person name="Woodage T."/>
            <person name="Worley K.C."/>
            <person name="Wu D."/>
            <person name="Yang S."/>
            <person name="Yao Q.A."/>
            <person name="Ye J."/>
            <person name="Yeh R.-F."/>
            <person name="Zaveri J.S."/>
            <person name="Zhan M."/>
            <person name="Zhang G."/>
            <person name="Zhao Q."/>
            <person name="Zheng L."/>
            <person name="Zheng X.H."/>
            <person name="Zhong F.N."/>
            <person name="Zhong W."/>
            <person name="Zhou X."/>
            <person name="Zhu S.C."/>
            <person name="Zhu X."/>
            <person name="Smith H.O."/>
            <person name="Gibbs R.A."/>
            <person name="Myers E.W."/>
            <person name="Rubin G.M."/>
            <person name="Venter J.C."/>
        </authorList>
    </citation>
    <scope>NUCLEOTIDE SEQUENCE [LARGE SCALE GENOMIC DNA]</scope>
    <source>
        <strain>Berkeley</strain>
    </source>
</reference>
<reference key="3">
    <citation type="journal article" date="2002" name="Genome Biol.">
        <title>Annotation of the Drosophila melanogaster euchromatic genome: a systematic review.</title>
        <authorList>
            <person name="Misra S."/>
            <person name="Crosby M.A."/>
            <person name="Mungall C.J."/>
            <person name="Matthews B.B."/>
            <person name="Campbell K.S."/>
            <person name="Hradecky P."/>
            <person name="Huang Y."/>
            <person name="Kaminker J.S."/>
            <person name="Millburn G.H."/>
            <person name="Prochnik S.E."/>
            <person name="Smith C.D."/>
            <person name="Tupy J.L."/>
            <person name="Whitfield E.J."/>
            <person name="Bayraktaroglu L."/>
            <person name="Berman B.P."/>
            <person name="Bettencourt B.R."/>
            <person name="Celniker S.E."/>
            <person name="de Grey A.D.N.J."/>
            <person name="Drysdale R.A."/>
            <person name="Harris N.L."/>
            <person name="Richter J."/>
            <person name="Russo S."/>
            <person name="Schroeder A.J."/>
            <person name="Shu S.Q."/>
            <person name="Stapleton M."/>
            <person name="Yamada C."/>
            <person name="Ashburner M."/>
            <person name="Gelbart W.M."/>
            <person name="Rubin G.M."/>
            <person name="Lewis S.E."/>
        </authorList>
    </citation>
    <scope>GENOME REANNOTATION</scope>
    <source>
        <strain>Berkeley</strain>
    </source>
</reference>
<reference key="4">
    <citation type="submission" date="2003-02" db="EMBL/GenBank/DDBJ databases">
        <authorList>
            <person name="Stapleton M."/>
            <person name="Brokstein P."/>
            <person name="Hong L."/>
            <person name="Agbayani A."/>
            <person name="Carlson J.W."/>
            <person name="Champe M."/>
            <person name="Chavez C."/>
            <person name="Dorsett V."/>
            <person name="Dresnek D."/>
            <person name="Farfan D."/>
            <person name="Frise E."/>
            <person name="George R.A."/>
            <person name="Gonzalez M."/>
            <person name="Guarin H."/>
            <person name="Kronmiller B."/>
            <person name="Li P.W."/>
            <person name="Liao G."/>
            <person name="Miranda A."/>
            <person name="Mungall C.J."/>
            <person name="Nunoo J."/>
            <person name="Pacleb J.M."/>
            <person name="Paragas V."/>
            <person name="Park S."/>
            <person name="Patel S."/>
            <person name="Phouanenavong S."/>
            <person name="Wan K.H."/>
            <person name="Yu C."/>
            <person name="Lewis S.E."/>
            <person name="Rubin G.M."/>
            <person name="Celniker S.E."/>
        </authorList>
    </citation>
    <scope>NUCLEOTIDE SEQUENCE [LARGE SCALE MRNA]</scope>
    <source>
        <strain>Berkeley</strain>
        <tissue>Embryo</tissue>
    </source>
</reference>
<organism>
    <name type="scientific">Drosophila melanogaster</name>
    <name type="common">Fruit fly</name>
    <dbReference type="NCBI Taxonomy" id="7227"/>
    <lineage>
        <taxon>Eukaryota</taxon>
        <taxon>Metazoa</taxon>
        <taxon>Ecdysozoa</taxon>
        <taxon>Arthropoda</taxon>
        <taxon>Hexapoda</taxon>
        <taxon>Insecta</taxon>
        <taxon>Pterygota</taxon>
        <taxon>Neoptera</taxon>
        <taxon>Endopterygota</taxon>
        <taxon>Diptera</taxon>
        <taxon>Brachycera</taxon>
        <taxon>Muscomorpha</taxon>
        <taxon>Ephydroidea</taxon>
        <taxon>Drosophilidae</taxon>
        <taxon>Drosophila</taxon>
        <taxon>Sophophora</taxon>
    </lineage>
</organism>
<dbReference type="EMBL" id="AF217651">
    <property type="protein sequence ID" value="AAF35309.1"/>
    <property type="molecule type" value="Genomic_DNA"/>
</dbReference>
<dbReference type="EMBL" id="AE014298">
    <property type="protein sequence ID" value="AAF46488.1"/>
    <property type="molecule type" value="Genomic_DNA"/>
</dbReference>
<dbReference type="EMBL" id="AY069693">
    <property type="protein sequence ID" value="AAL39838.1"/>
    <property type="molecule type" value="mRNA"/>
</dbReference>
<dbReference type="RefSeq" id="NP_652605.1">
    <property type="nucleotide sequence ID" value="NM_144348.3"/>
</dbReference>
<dbReference type="SMR" id="Q9V3B6"/>
<dbReference type="BioGRID" id="72723">
    <property type="interactions" value="8"/>
</dbReference>
<dbReference type="FunCoup" id="Q9V3B6">
    <property type="interactions" value="2446"/>
</dbReference>
<dbReference type="IntAct" id="Q9V3B6">
    <property type="interactions" value="5"/>
</dbReference>
<dbReference type="STRING" id="7227.FBpp0071259"/>
<dbReference type="PaxDb" id="7227-FBpp0071259"/>
<dbReference type="DNASU" id="53435"/>
<dbReference type="EnsemblMetazoa" id="FBtr0071324">
    <property type="protein sequence ID" value="FBpp0071259"/>
    <property type="gene ID" value="FBgn0040235"/>
</dbReference>
<dbReference type="GeneID" id="53435"/>
<dbReference type="KEGG" id="dme:Dmel_CG12135"/>
<dbReference type="UCSC" id="CG12135-RA">
    <property type="organism name" value="d. melanogaster"/>
</dbReference>
<dbReference type="AGR" id="FB:FBgn0040235"/>
<dbReference type="CTD" id="53435"/>
<dbReference type="FlyBase" id="FBgn0040235">
    <property type="gene designation" value="c12.1"/>
</dbReference>
<dbReference type="VEuPathDB" id="VectorBase:FBgn0040235"/>
<dbReference type="eggNOG" id="KOG3228">
    <property type="taxonomic scope" value="Eukaryota"/>
</dbReference>
<dbReference type="GeneTree" id="ENSGT00390000012084"/>
<dbReference type="HOGENOM" id="CLU_068312_0_1_1"/>
<dbReference type="InParanoid" id="Q9V3B6"/>
<dbReference type="OMA" id="KYREHGQ"/>
<dbReference type="OrthoDB" id="30179at2759"/>
<dbReference type="PhylomeDB" id="Q9V3B6"/>
<dbReference type="Reactome" id="R-DME-72163">
    <property type="pathway name" value="mRNA Splicing - Major Pathway"/>
</dbReference>
<dbReference type="BioGRID-ORCS" id="53435">
    <property type="hits" value="0 hits in 1 CRISPR screen"/>
</dbReference>
<dbReference type="ChiTaRS" id="c12.1">
    <property type="organism name" value="fly"/>
</dbReference>
<dbReference type="GenomeRNAi" id="53435"/>
<dbReference type="PRO" id="PR:Q9V3B6"/>
<dbReference type="Proteomes" id="UP000000803">
    <property type="component" value="Chromosome X"/>
</dbReference>
<dbReference type="Bgee" id="FBgn0040235">
    <property type="expression patterns" value="Expressed in adult enteroendocrine precursor cell in adult midgut (Drosophila) and 134 other cell types or tissues"/>
</dbReference>
<dbReference type="GO" id="GO:0071013">
    <property type="term" value="C:catalytic step 2 spliceosome"/>
    <property type="evidence" value="ECO:0007005"/>
    <property type="project" value="FlyBase"/>
</dbReference>
<dbReference type="GO" id="GO:0005634">
    <property type="term" value="C:nucleus"/>
    <property type="evidence" value="ECO:0000250"/>
    <property type="project" value="UniProtKB"/>
</dbReference>
<dbReference type="GO" id="GO:0071011">
    <property type="term" value="C:precatalytic spliceosome"/>
    <property type="evidence" value="ECO:0007005"/>
    <property type="project" value="FlyBase"/>
</dbReference>
<dbReference type="GO" id="GO:0003723">
    <property type="term" value="F:RNA binding"/>
    <property type="evidence" value="ECO:0000250"/>
    <property type="project" value="UniProtKB"/>
</dbReference>
<dbReference type="GO" id="GO:0045292">
    <property type="term" value="P:mRNA cis splicing, via spliceosome"/>
    <property type="evidence" value="ECO:0000318"/>
    <property type="project" value="GO_Central"/>
</dbReference>
<dbReference type="GO" id="GO:0000398">
    <property type="term" value="P:mRNA splicing, via spliceosome"/>
    <property type="evidence" value="ECO:0000250"/>
    <property type="project" value="UniProtKB"/>
</dbReference>
<dbReference type="InterPro" id="IPR006973">
    <property type="entry name" value="Cwf_Cwc_15"/>
</dbReference>
<dbReference type="PANTHER" id="PTHR12718">
    <property type="entry name" value="CELL CYCLE CONTROL PROTEIN CWF15"/>
    <property type="match status" value="1"/>
</dbReference>
<dbReference type="PANTHER" id="PTHR12718:SF2">
    <property type="entry name" value="SPLICEOSOME-ASSOCIATED PROTEIN CWC15 HOMOLOG"/>
    <property type="match status" value="1"/>
</dbReference>
<dbReference type="Pfam" id="PF04889">
    <property type="entry name" value="Cwf_Cwc_15"/>
    <property type="match status" value="1"/>
</dbReference>
<name>CWC15_DROME</name>
<comment type="function">
    <text evidence="1">Involved in pre-mRNA splicing.</text>
</comment>
<comment type="similarity">
    <text evidence="4">Belongs to the CWC15 family.</text>
</comment>
<gene>
    <name type="primary">c12.1</name>
    <name type="ORF">CG12135</name>
</gene>
<proteinExistence type="evidence at transcript level"/>
<protein>
    <recommendedName>
        <fullName>Protein CWC15 homolog</fullName>
    </recommendedName>
</protein>
<evidence type="ECO:0000250" key="1"/>
<evidence type="ECO:0000255" key="2"/>
<evidence type="ECO:0000256" key="3">
    <source>
        <dbReference type="SAM" id="MobiDB-lite"/>
    </source>
</evidence>
<evidence type="ECO:0000305" key="4"/>
<accession>Q9V3B6</accession>
<feature type="chain" id="PRO_0000291552" description="Protein CWC15 homolog">
    <location>
        <begin position="1"/>
        <end position="259"/>
    </location>
</feature>
<feature type="region of interest" description="Disordered" evidence="3">
    <location>
        <begin position="1"/>
        <end position="182"/>
    </location>
</feature>
<feature type="coiled-coil region" evidence="2">
    <location>
        <begin position="150"/>
        <end position="182"/>
    </location>
</feature>
<feature type="compositionally biased region" description="Basic and acidic residues" evidence="3">
    <location>
        <begin position="52"/>
        <end position="71"/>
    </location>
</feature>
<feature type="compositionally biased region" description="Low complexity" evidence="3">
    <location>
        <begin position="72"/>
        <end position="82"/>
    </location>
</feature>
<feature type="compositionally biased region" description="Low complexity" evidence="3">
    <location>
        <begin position="114"/>
        <end position="126"/>
    </location>
</feature>
<feature type="compositionally biased region" description="Acidic residues" evidence="3">
    <location>
        <begin position="129"/>
        <end position="150"/>
    </location>
</feature>
<feature type="compositionally biased region" description="Basic and acidic residues" evidence="3">
    <location>
        <begin position="157"/>
        <end position="182"/>
    </location>
</feature>
<keyword id="KW-0175">Coiled coil</keyword>
<keyword id="KW-0507">mRNA processing</keyword>
<keyword id="KW-0508">mRNA splicing</keyword>
<keyword id="KW-1185">Reference proteome</keyword>
<sequence>MTTAARPTFDPARGGSGRGEKDLSALSKQYSSRDLPGHTKLKYRETGQGTSDENRNRDFRKELEEREREARSGTGATSSSSGKALPSIVRKAIEANNAGGGSSAAKRSKPDAGQQQAQQAAQQQAANMDADEPLDNDSSDSDSDSDDDDAALLAELQKIKQERLQETARRESEKKQEDERIRMENILSGNPLMNYEPGTAASAAGRASGLGGDLKIKRRWDDDVVFKNCARSAPDKKTHFVNDALRSDFHKKFMDKYIK</sequence>